<feature type="chain" id="PRO_0000182472" description="Heat-inducible transcription repressor HrcA">
    <location>
        <begin position="1"/>
        <end position="339"/>
    </location>
</feature>
<keyword id="KW-1185">Reference proteome</keyword>
<keyword id="KW-0678">Repressor</keyword>
<keyword id="KW-0346">Stress response</keyword>
<keyword id="KW-0804">Transcription</keyword>
<keyword id="KW-0805">Transcription regulation</keyword>
<organism>
    <name type="scientific">Clostridium perfringens (strain 13 / Type A)</name>
    <dbReference type="NCBI Taxonomy" id="195102"/>
    <lineage>
        <taxon>Bacteria</taxon>
        <taxon>Bacillati</taxon>
        <taxon>Bacillota</taxon>
        <taxon>Clostridia</taxon>
        <taxon>Eubacteriales</taxon>
        <taxon>Clostridiaceae</taxon>
        <taxon>Clostridium</taxon>
    </lineage>
</organism>
<sequence length="339" mass="37980">MIDDRKLQILRAIIQDYISTGEPVGSRTIAKKYNLGVSSATIRNEMADLEDMGFLEQPHTSAGRIPSSRGYRLYVDRMIEFERLSSEEEGLIRNSIIDGTLYEVDKIIKQTSALLSELTKMTCIVKAPSVHKSFVKSIQLLKVDDVSILCVLVTDNGVIRNTVIKVKSVPISEELIKISKIITERLKNLTIEQINLEVISNLNRALSGYEDIVNAVLPALYESLKGDETSEVFLEGTINIFNYPEYNNIHKAKEILELLHDKKSISELISDSDDMTVKIGDEIFVPEAKECSIISAGYHVGDKSLGTIALIGPRRINYSKVLSIMTEVMKELNETLKNK</sequence>
<accession>Q8XIS9</accession>
<evidence type="ECO:0000255" key="1">
    <source>
        <dbReference type="HAMAP-Rule" id="MF_00081"/>
    </source>
</evidence>
<proteinExistence type="inferred from homology"/>
<reference key="1">
    <citation type="journal article" date="2002" name="Proc. Natl. Acad. Sci. U.S.A.">
        <title>Complete genome sequence of Clostridium perfringens, an anaerobic flesh-eater.</title>
        <authorList>
            <person name="Shimizu T."/>
            <person name="Ohtani K."/>
            <person name="Hirakawa H."/>
            <person name="Ohshima K."/>
            <person name="Yamashita A."/>
            <person name="Shiba T."/>
            <person name="Ogasawara N."/>
            <person name="Hattori M."/>
            <person name="Kuhara S."/>
            <person name="Hayashi H."/>
        </authorList>
    </citation>
    <scope>NUCLEOTIDE SEQUENCE [LARGE SCALE GENOMIC DNA]</scope>
    <source>
        <strain>13 / Type A</strain>
    </source>
</reference>
<comment type="function">
    <text evidence="1">Negative regulator of class I heat shock genes (grpE-dnaK-dnaJ and groELS operons). Prevents heat-shock induction of these operons.</text>
</comment>
<comment type="similarity">
    <text evidence="1">Belongs to the HrcA family.</text>
</comment>
<protein>
    <recommendedName>
        <fullName evidence="1">Heat-inducible transcription repressor HrcA</fullName>
    </recommendedName>
</protein>
<gene>
    <name evidence="1" type="primary">hrcA</name>
    <name type="ordered locus">CPE2035</name>
</gene>
<name>HRCA_CLOPE</name>
<dbReference type="EMBL" id="BA000016">
    <property type="protein sequence ID" value="BAB81741.1"/>
    <property type="molecule type" value="Genomic_DNA"/>
</dbReference>
<dbReference type="RefSeq" id="WP_003454856.1">
    <property type="nucleotide sequence ID" value="NC_003366.1"/>
</dbReference>
<dbReference type="SMR" id="Q8XIS9"/>
<dbReference type="STRING" id="195102.gene:10491305"/>
<dbReference type="KEGG" id="cpe:CPE2035"/>
<dbReference type="HOGENOM" id="CLU_050019_1_0_9"/>
<dbReference type="Proteomes" id="UP000000818">
    <property type="component" value="Chromosome"/>
</dbReference>
<dbReference type="GO" id="GO:0003677">
    <property type="term" value="F:DNA binding"/>
    <property type="evidence" value="ECO:0007669"/>
    <property type="project" value="InterPro"/>
</dbReference>
<dbReference type="GO" id="GO:0045892">
    <property type="term" value="P:negative regulation of DNA-templated transcription"/>
    <property type="evidence" value="ECO:0007669"/>
    <property type="project" value="UniProtKB-UniRule"/>
</dbReference>
<dbReference type="FunFam" id="1.10.10.10:FF:000049">
    <property type="entry name" value="Heat-inducible transcription repressor HrcA"/>
    <property type="match status" value="1"/>
</dbReference>
<dbReference type="Gene3D" id="3.30.450.40">
    <property type="match status" value="1"/>
</dbReference>
<dbReference type="Gene3D" id="3.30.390.60">
    <property type="entry name" value="Heat-inducible transcription repressor hrca homolog, domain 3"/>
    <property type="match status" value="1"/>
</dbReference>
<dbReference type="Gene3D" id="1.10.10.10">
    <property type="entry name" value="Winged helix-like DNA-binding domain superfamily/Winged helix DNA-binding domain"/>
    <property type="match status" value="1"/>
</dbReference>
<dbReference type="HAMAP" id="MF_00081">
    <property type="entry name" value="HrcA"/>
    <property type="match status" value="1"/>
</dbReference>
<dbReference type="InterPro" id="IPR029016">
    <property type="entry name" value="GAF-like_dom_sf"/>
</dbReference>
<dbReference type="InterPro" id="IPR002571">
    <property type="entry name" value="HrcA"/>
</dbReference>
<dbReference type="InterPro" id="IPR021153">
    <property type="entry name" value="HrcA_C"/>
</dbReference>
<dbReference type="InterPro" id="IPR036388">
    <property type="entry name" value="WH-like_DNA-bd_sf"/>
</dbReference>
<dbReference type="InterPro" id="IPR036390">
    <property type="entry name" value="WH_DNA-bd_sf"/>
</dbReference>
<dbReference type="InterPro" id="IPR023120">
    <property type="entry name" value="WHTH_transcript_rep_HrcA_IDD"/>
</dbReference>
<dbReference type="NCBIfam" id="TIGR00331">
    <property type="entry name" value="hrcA"/>
    <property type="match status" value="1"/>
</dbReference>
<dbReference type="PANTHER" id="PTHR34824">
    <property type="entry name" value="HEAT-INDUCIBLE TRANSCRIPTION REPRESSOR HRCA"/>
    <property type="match status" value="1"/>
</dbReference>
<dbReference type="PANTHER" id="PTHR34824:SF1">
    <property type="entry name" value="HEAT-INDUCIBLE TRANSCRIPTION REPRESSOR HRCA"/>
    <property type="match status" value="1"/>
</dbReference>
<dbReference type="Pfam" id="PF01628">
    <property type="entry name" value="HrcA"/>
    <property type="match status" value="1"/>
</dbReference>
<dbReference type="PIRSF" id="PIRSF005485">
    <property type="entry name" value="HrcA"/>
    <property type="match status" value="1"/>
</dbReference>
<dbReference type="SUPFAM" id="SSF55781">
    <property type="entry name" value="GAF domain-like"/>
    <property type="match status" value="1"/>
</dbReference>
<dbReference type="SUPFAM" id="SSF46785">
    <property type="entry name" value="Winged helix' DNA-binding domain"/>
    <property type="match status" value="1"/>
</dbReference>